<dbReference type="EC" id="2.1.1.195" evidence="1"/>
<dbReference type="EMBL" id="CP000095">
    <property type="protein sequence ID" value="AAZ58851.1"/>
    <property type="molecule type" value="Genomic_DNA"/>
</dbReference>
<dbReference type="RefSeq" id="WP_011293995.1">
    <property type="nucleotide sequence ID" value="NC_007335.2"/>
</dbReference>
<dbReference type="SMR" id="Q46I27"/>
<dbReference type="STRING" id="59920.PMN2A_1362"/>
<dbReference type="KEGG" id="pmn:PMN2A_1362"/>
<dbReference type="HOGENOM" id="CLU_041273_1_2_3"/>
<dbReference type="OrthoDB" id="6439987at2"/>
<dbReference type="PhylomeDB" id="Q46I27"/>
<dbReference type="UniPathway" id="UPA00148">
    <property type="reaction ID" value="UER00227"/>
</dbReference>
<dbReference type="Proteomes" id="UP000002535">
    <property type="component" value="Chromosome"/>
</dbReference>
<dbReference type="GO" id="GO:0043780">
    <property type="term" value="F:cobalt-precorrin-5B C1-methyltransferase activity"/>
    <property type="evidence" value="ECO:0007669"/>
    <property type="project" value="RHEA"/>
</dbReference>
<dbReference type="GO" id="GO:0019251">
    <property type="term" value="P:anaerobic cobalamin biosynthetic process"/>
    <property type="evidence" value="ECO:0007669"/>
    <property type="project" value="UniProtKB-UniRule"/>
</dbReference>
<dbReference type="GO" id="GO:0032259">
    <property type="term" value="P:methylation"/>
    <property type="evidence" value="ECO:0007669"/>
    <property type="project" value="UniProtKB-KW"/>
</dbReference>
<dbReference type="Gene3D" id="3.30.2110.10">
    <property type="entry name" value="CbiD-like"/>
    <property type="match status" value="1"/>
</dbReference>
<dbReference type="HAMAP" id="MF_00787">
    <property type="entry name" value="CbiD"/>
    <property type="match status" value="1"/>
</dbReference>
<dbReference type="InterPro" id="IPR002748">
    <property type="entry name" value="CbiD"/>
</dbReference>
<dbReference type="InterPro" id="IPR036074">
    <property type="entry name" value="CbiD_sf"/>
</dbReference>
<dbReference type="NCBIfam" id="TIGR00312">
    <property type="entry name" value="cbiD"/>
    <property type="match status" value="1"/>
</dbReference>
<dbReference type="PANTHER" id="PTHR35863">
    <property type="entry name" value="COBALT-PRECORRIN-5B C(1)-METHYLTRANSFERASE"/>
    <property type="match status" value="1"/>
</dbReference>
<dbReference type="PANTHER" id="PTHR35863:SF1">
    <property type="entry name" value="COBALT-PRECORRIN-5B C(1)-METHYLTRANSFERASE"/>
    <property type="match status" value="1"/>
</dbReference>
<dbReference type="Pfam" id="PF01888">
    <property type="entry name" value="CbiD"/>
    <property type="match status" value="1"/>
</dbReference>
<dbReference type="PIRSF" id="PIRSF026782">
    <property type="entry name" value="CbiD"/>
    <property type="match status" value="1"/>
</dbReference>
<dbReference type="SUPFAM" id="SSF111342">
    <property type="entry name" value="CbiD-like"/>
    <property type="match status" value="1"/>
</dbReference>
<evidence type="ECO:0000255" key="1">
    <source>
        <dbReference type="HAMAP-Rule" id="MF_00787"/>
    </source>
</evidence>
<accession>Q46I27</accession>
<feature type="chain" id="PRO_0000257771" description="Cobalt-precorrin-5B C(1)-methyltransferase">
    <location>
        <begin position="1"/>
        <end position="381"/>
    </location>
</feature>
<protein>
    <recommendedName>
        <fullName evidence="1">Cobalt-precorrin-5B C(1)-methyltransferase</fullName>
        <ecNumber evidence="1">2.1.1.195</ecNumber>
    </recommendedName>
    <alternativeName>
        <fullName evidence="1">Cobalt-precorrin-6A synthase</fullName>
    </alternativeName>
</protein>
<keyword id="KW-0169">Cobalamin biosynthesis</keyword>
<keyword id="KW-0489">Methyltransferase</keyword>
<keyword id="KW-1185">Reference proteome</keyword>
<keyword id="KW-0949">S-adenosyl-L-methionine</keyword>
<keyword id="KW-0808">Transferase</keyword>
<organism>
    <name type="scientific">Prochlorococcus marinus (strain NATL2A)</name>
    <dbReference type="NCBI Taxonomy" id="59920"/>
    <lineage>
        <taxon>Bacteria</taxon>
        <taxon>Bacillati</taxon>
        <taxon>Cyanobacteriota</taxon>
        <taxon>Cyanophyceae</taxon>
        <taxon>Synechococcales</taxon>
        <taxon>Prochlorococcaceae</taxon>
        <taxon>Prochlorococcus</taxon>
    </lineage>
</organism>
<gene>
    <name evidence="1" type="primary">cbiD</name>
    <name type="ordered locus">PMN2A_1362</name>
</gene>
<reference key="1">
    <citation type="journal article" date="2007" name="PLoS Genet.">
        <title>Patterns and implications of gene gain and loss in the evolution of Prochlorococcus.</title>
        <authorList>
            <person name="Kettler G.C."/>
            <person name="Martiny A.C."/>
            <person name="Huang K."/>
            <person name="Zucker J."/>
            <person name="Coleman M.L."/>
            <person name="Rodrigue S."/>
            <person name="Chen F."/>
            <person name="Lapidus A."/>
            <person name="Ferriera S."/>
            <person name="Johnson J."/>
            <person name="Steglich C."/>
            <person name="Church G.M."/>
            <person name="Richardson P."/>
            <person name="Chisholm S.W."/>
        </authorList>
    </citation>
    <scope>NUCLEOTIDE SEQUENCE [LARGE SCALE GENOMIC DNA]</scope>
    <source>
        <strain>NATL2A</strain>
    </source>
</reference>
<proteinExistence type="inferred from homology"/>
<sequence length="381" mass="41805">MNQFTLPVWVVAAAKSATNILIGNKFRDKERIDLPNNEKSISVPISSSALLDNGKRSLAVSHCQSGLPLDITRGVEIWAYIQLSKGGFQSKGKVRNGFPDWLDFHAGYGVGKFQSSGQPCISQFARDLLCINLYPLLPKGSSIKVEIILPEGKDRASKTSNEAFGVVDGLSLIGTQAEVQISASPDQLKNTKELLHHKCSEAKFDGCLTFVIGENGMDLAMKYGLPANQIIKTGNWLGPLLVAAAENGVKKLLLFGYHGKLIKLSGGVFHTHHHLADGRIEILTSIAFREGISFDLIELISKSTSVENALLTLEVSNPEAVSLIWSRMAKEIEIKSRSYVNRYLSSSMEIGSVLFDRKRQMRWAGLEGLKQINSLGLILKR</sequence>
<comment type="function">
    <text evidence="1">Catalyzes the methylation of C-1 in cobalt-precorrin-5B to form cobalt-precorrin-6A.</text>
</comment>
<comment type="catalytic activity">
    <reaction evidence="1">
        <text>Co-precorrin-5B + S-adenosyl-L-methionine = Co-precorrin-6A + S-adenosyl-L-homocysteine</text>
        <dbReference type="Rhea" id="RHEA:26285"/>
        <dbReference type="ChEBI" id="CHEBI:57856"/>
        <dbReference type="ChEBI" id="CHEBI:59789"/>
        <dbReference type="ChEBI" id="CHEBI:60063"/>
        <dbReference type="ChEBI" id="CHEBI:60064"/>
        <dbReference type="EC" id="2.1.1.195"/>
    </reaction>
</comment>
<comment type="pathway">
    <text evidence="1">Cofactor biosynthesis; adenosylcobalamin biosynthesis; cob(II)yrinate a,c-diamide from sirohydrochlorin (anaerobic route): step 6/10.</text>
</comment>
<comment type="similarity">
    <text evidence="1">Belongs to the CbiD family.</text>
</comment>
<name>CBID_PROMT</name>